<feature type="chain" id="PRO_0000380514" description="DNA ligase">
    <location>
        <begin position="1"/>
        <end position="670"/>
    </location>
</feature>
<feature type="domain" description="BRCT" evidence="1">
    <location>
        <begin position="592"/>
        <end position="670"/>
    </location>
</feature>
<feature type="active site" description="N6-AMP-lysine intermediate" evidence="1">
    <location>
        <position position="115"/>
    </location>
</feature>
<feature type="binding site" evidence="1">
    <location>
        <begin position="32"/>
        <end position="36"/>
    </location>
    <ligand>
        <name>NAD(+)</name>
        <dbReference type="ChEBI" id="CHEBI:57540"/>
    </ligand>
</feature>
<feature type="binding site" evidence="1">
    <location>
        <begin position="81"/>
        <end position="82"/>
    </location>
    <ligand>
        <name>NAD(+)</name>
        <dbReference type="ChEBI" id="CHEBI:57540"/>
    </ligand>
</feature>
<feature type="binding site" evidence="1">
    <location>
        <position position="113"/>
    </location>
    <ligand>
        <name>NAD(+)</name>
        <dbReference type="ChEBI" id="CHEBI:57540"/>
    </ligand>
</feature>
<feature type="binding site" evidence="1">
    <location>
        <position position="136"/>
    </location>
    <ligand>
        <name>NAD(+)</name>
        <dbReference type="ChEBI" id="CHEBI:57540"/>
    </ligand>
</feature>
<feature type="binding site" evidence="1">
    <location>
        <position position="173"/>
    </location>
    <ligand>
        <name>NAD(+)</name>
        <dbReference type="ChEBI" id="CHEBI:57540"/>
    </ligand>
</feature>
<feature type="binding site" evidence="1">
    <location>
        <position position="290"/>
    </location>
    <ligand>
        <name>NAD(+)</name>
        <dbReference type="ChEBI" id="CHEBI:57540"/>
    </ligand>
</feature>
<feature type="binding site" evidence="1">
    <location>
        <position position="314"/>
    </location>
    <ligand>
        <name>NAD(+)</name>
        <dbReference type="ChEBI" id="CHEBI:57540"/>
    </ligand>
</feature>
<feature type="binding site" evidence="1">
    <location>
        <position position="408"/>
    </location>
    <ligand>
        <name>Zn(2+)</name>
        <dbReference type="ChEBI" id="CHEBI:29105"/>
    </ligand>
</feature>
<feature type="binding site" evidence="1">
    <location>
        <position position="411"/>
    </location>
    <ligand>
        <name>Zn(2+)</name>
        <dbReference type="ChEBI" id="CHEBI:29105"/>
    </ligand>
</feature>
<feature type="binding site" evidence="1">
    <location>
        <position position="426"/>
    </location>
    <ligand>
        <name>Zn(2+)</name>
        <dbReference type="ChEBI" id="CHEBI:29105"/>
    </ligand>
</feature>
<feature type="binding site" evidence="1">
    <location>
        <position position="432"/>
    </location>
    <ligand>
        <name>Zn(2+)</name>
        <dbReference type="ChEBI" id="CHEBI:29105"/>
    </ligand>
</feature>
<sequence>MESIIQQINQLRTSLRHHEHQYHVLDAPEIPDAEYDRMMQQLRDLEAQHPELVTNDSPTQRVGAAPLDAFEQVKHEVPMLSLDNVFDEESYLAFDKRVHDRLKTAEPLTFCCELKLDGLAVSLLYENGELVRAATRGDGTTGENITANVRTIRAIPLRLHGDNVPRRVEVRGEVFMPQAGFEQLNEEARRKGGKVFANPRNAAAGSLRQLDPRITAKRPLTFFCYGVGLLDGGELPRSHIQCLMQFKAWGLPVSERVKLCTGSDQVIAFYRQIEQDRAGLGFDIDGVVIKVDDLALQEQLGFVARAPRWATAFKFPAQEQITQVREVEFQVGRTGAITPVARLEPVQVAGVIVSNATLHNADEIERLGLRIGDTVIVRRAGDVIPQVVGVVMEQRPDDTKEITFPSQCPVCGSDIERVEGEAVARCTGGLFCAAQRKEALKHFVSRRALDVDGMGDKIIEQLVEKQYVENPADLFQLTAGKLTGLDRMGPKSAQNLIAALEKAKQTTFARFLYALGIREVGEATAANLAAHFRTLDNLRAADIETLKSVPDVGEVVAKHVMNFLSEEHNQKVIEELEKVVSWPEPQQIVVEESDSPFAGKTVVLTGSLTILSRDEAKDRLTALGAKVSGSVSKKTHLVIAGEAAGSKLAKAQELGIKVIDEAEMIRLLGE</sequence>
<comment type="function">
    <text evidence="1">DNA ligase that catalyzes the formation of phosphodiester linkages between 5'-phosphoryl and 3'-hydroxyl groups in double-stranded DNA using NAD as a coenzyme and as the energy source for the reaction. It is essential for DNA replication and repair of damaged DNA.</text>
</comment>
<comment type="catalytic activity">
    <reaction evidence="1">
        <text>NAD(+) + (deoxyribonucleotide)n-3'-hydroxyl + 5'-phospho-(deoxyribonucleotide)m = (deoxyribonucleotide)n+m + AMP + beta-nicotinamide D-nucleotide.</text>
        <dbReference type="EC" id="6.5.1.2"/>
    </reaction>
</comment>
<comment type="cofactor">
    <cofactor evidence="1">
        <name>Mg(2+)</name>
        <dbReference type="ChEBI" id="CHEBI:18420"/>
    </cofactor>
    <cofactor evidence="1">
        <name>Mn(2+)</name>
        <dbReference type="ChEBI" id="CHEBI:29035"/>
    </cofactor>
</comment>
<comment type="similarity">
    <text evidence="1">Belongs to the NAD-dependent DNA ligase family. LigA subfamily.</text>
</comment>
<protein>
    <recommendedName>
        <fullName evidence="1">DNA ligase</fullName>
        <ecNumber evidence="1">6.5.1.2</ecNumber>
    </recommendedName>
    <alternativeName>
        <fullName evidence="1">Polydeoxyribonucleotide synthase [NAD(+)]</fullName>
    </alternativeName>
</protein>
<dbReference type="EC" id="6.5.1.2" evidence="1"/>
<dbReference type="EMBL" id="CP000901">
    <property type="protein sequence ID" value="ABX87435.1"/>
    <property type="molecule type" value="Genomic_DNA"/>
</dbReference>
<dbReference type="RefSeq" id="WP_002213368.1">
    <property type="nucleotide sequence ID" value="NZ_CP009935.1"/>
</dbReference>
<dbReference type="SMR" id="A9QZH0"/>
<dbReference type="GeneID" id="57975709"/>
<dbReference type="KEGG" id="ypg:YpAngola_A2744"/>
<dbReference type="PATRIC" id="fig|349746.12.peg.3773"/>
<dbReference type="GO" id="GO:0005829">
    <property type="term" value="C:cytosol"/>
    <property type="evidence" value="ECO:0007669"/>
    <property type="project" value="TreeGrafter"/>
</dbReference>
<dbReference type="GO" id="GO:0003677">
    <property type="term" value="F:DNA binding"/>
    <property type="evidence" value="ECO:0007669"/>
    <property type="project" value="InterPro"/>
</dbReference>
<dbReference type="GO" id="GO:0003911">
    <property type="term" value="F:DNA ligase (NAD+) activity"/>
    <property type="evidence" value="ECO:0007669"/>
    <property type="project" value="UniProtKB-UniRule"/>
</dbReference>
<dbReference type="GO" id="GO:0046872">
    <property type="term" value="F:metal ion binding"/>
    <property type="evidence" value="ECO:0007669"/>
    <property type="project" value="UniProtKB-KW"/>
</dbReference>
<dbReference type="GO" id="GO:0006281">
    <property type="term" value="P:DNA repair"/>
    <property type="evidence" value="ECO:0007669"/>
    <property type="project" value="UniProtKB-KW"/>
</dbReference>
<dbReference type="GO" id="GO:0006260">
    <property type="term" value="P:DNA replication"/>
    <property type="evidence" value="ECO:0007669"/>
    <property type="project" value="UniProtKB-KW"/>
</dbReference>
<dbReference type="CDD" id="cd17748">
    <property type="entry name" value="BRCT_DNA_ligase_like"/>
    <property type="match status" value="1"/>
</dbReference>
<dbReference type="CDD" id="cd00114">
    <property type="entry name" value="LIGANc"/>
    <property type="match status" value="1"/>
</dbReference>
<dbReference type="FunFam" id="1.10.150.20:FF:000006">
    <property type="entry name" value="DNA ligase"/>
    <property type="match status" value="1"/>
</dbReference>
<dbReference type="FunFam" id="1.10.150.20:FF:000007">
    <property type="entry name" value="DNA ligase"/>
    <property type="match status" value="1"/>
</dbReference>
<dbReference type="FunFam" id="1.10.287.610:FF:000002">
    <property type="entry name" value="DNA ligase"/>
    <property type="match status" value="1"/>
</dbReference>
<dbReference type="FunFam" id="2.40.50.140:FF:000012">
    <property type="entry name" value="DNA ligase"/>
    <property type="match status" value="1"/>
</dbReference>
<dbReference type="FunFam" id="3.30.470.30:FF:000001">
    <property type="entry name" value="DNA ligase"/>
    <property type="match status" value="1"/>
</dbReference>
<dbReference type="FunFam" id="3.40.50.10190:FF:000004">
    <property type="entry name" value="DNA ligase"/>
    <property type="match status" value="1"/>
</dbReference>
<dbReference type="FunFam" id="6.20.10.30:FF:000001">
    <property type="entry name" value="DNA ligase"/>
    <property type="match status" value="1"/>
</dbReference>
<dbReference type="Gene3D" id="6.20.10.30">
    <property type="match status" value="1"/>
</dbReference>
<dbReference type="Gene3D" id="1.10.150.20">
    <property type="entry name" value="5' to 3' exonuclease, C-terminal subdomain"/>
    <property type="match status" value="2"/>
</dbReference>
<dbReference type="Gene3D" id="3.40.50.10190">
    <property type="entry name" value="BRCT domain"/>
    <property type="match status" value="1"/>
</dbReference>
<dbReference type="Gene3D" id="3.30.470.30">
    <property type="entry name" value="DNA ligase/mRNA capping enzyme"/>
    <property type="match status" value="1"/>
</dbReference>
<dbReference type="Gene3D" id="1.10.287.610">
    <property type="entry name" value="Helix hairpin bin"/>
    <property type="match status" value="1"/>
</dbReference>
<dbReference type="Gene3D" id="2.40.50.140">
    <property type="entry name" value="Nucleic acid-binding proteins"/>
    <property type="match status" value="1"/>
</dbReference>
<dbReference type="HAMAP" id="MF_01588">
    <property type="entry name" value="DNA_ligase_A"/>
    <property type="match status" value="1"/>
</dbReference>
<dbReference type="InterPro" id="IPR001357">
    <property type="entry name" value="BRCT_dom"/>
</dbReference>
<dbReference type="InterPro" id="IPR036420">
    <property type="entry name" value="BRCT_dom_sf"/>
</dbReference>
<dbReference type="InterPro" id="IPR041663">
    <property type="entry name" value="DisA/LigA_HHH"/>
</dbReference>
<dbReference type="InterPro" id="IPR001679">
    <property type="entry name" value="DNA_ligase"/>
</dbReference>
<dbReference type="InterPro" id="IPR018239">
    <property type="entry name" value="DNA_ligase_AS"/>
</dbReference>
<dbReference type="InterPro" id="IPR033136">
    <property type="entry name" value="DNA_ligase_CS"/>
</dbReference>
<dbReference type="InterPro" id="IPR013839">
    <property type="entry name" value="DNAligase_adenylation"/>
</dbReference>
<dbReference type="InterPro" id="IPR013840">
    <property type="entry name" value="DNAligase_N"/>
</dbReference>
<dbReference type="InterPro" id="IPR003583">
    <property type="entry name" value="Hlx-hairpin-Hlx_DNA-bd_motif"/>
</dbReference>
<dbReference type="InterPro" id="IPR012340">
    <property type="entry name" value="NA-bd_OB-fold"/>
</dbReference>
<dbReference type="InterPro" id="IPR004150">
    <property type="entry name" value="NAD_DNA_ligase_OB"/>
</dbReference>
<dbReference type="InterPro" id="IPR010994">
    <property type="entry name" value="RuvA_2-like"/>
</dbReference>
<dbReference type="InterPro" id="IPR004149">
    <property type="entry name" value="Znf_DNAligase_C4"/>
</dbReference>
<dbReference type="NCBIfam" id="TIGR00575">
    <property type="entry name" value="dnlj"/>
    <property type="match status" value="1"/>
</dbReference>
<dbReference type="NCBIfam" id="NF005932">
    <property type="entry name" value="PRK07956.1"/>
    <property type="match status" value="1"/>
</dbReference>
<dbReference type="PANTHER" id="PTHR23389">
    <property type="entry name" value="CHROMOSOME TRANSMISSION FIDELITY FACTOR 18"/>
    <property type="match status" value="1"/>
</dbReference>
<dbReference type="PANTHER" id="PTHR23389:SF9">
    <property type="entry name" value="DNA LIGASE"/>
    <property type="match status" value="1"/>
</dbReference>
<dbReference type="Pfam" id="PF00533">
    <property type="entry name" value="BRCT"/>
    <property type="match status" value="1"/>
</dbReference>
<dbReference type="Pfam" id="PF01653">
    <property type="entry name" value="DNA_ligase_aden"/>
    <property type="match status" value="1"/>
</dbReference>
<dbReference type="Pfam" id="PF03120">
    <property type="entry name" value="DNA_ligase_OB"/>
    <property type="match status" value="1"/>
</dbReference>
<dbReference type="Pfam" id="PF03119">
    <property type="entry name" value="DNA_ligase_ZBD"/>
    <property type="match status" value="1"/>
</dbReference>
<dbReference type="Pfam" id="PF12826">
    <property type="entry name" value="HHH_2"/>
    <property type="match status" value="1"/>
</dbReference>
<dbReference type="Pfam" id="PF14520">
    <property type="entry name" value="HHH_5"/>
    <property type="match status" value="1"/>
</dbReference>
<dbReference type="Pfam" id="PF22745">
    <property type="entry name" value="Nlig-Ia"/>
    <property type="match status" value="1"/>
</dbReference>
<dbReference type="PIRSF" id="PIRSF001604">
    <property type="entry name" value="LigA"/>
    <property type="match status" value="1"/>
</dbReference>
<dbReference type="SMART" id="SM00292">
    <property type="entry name" value="BRCT"/>
    <property type="match status" value="1"/>
</dbReference>
<dbReference type="SMART" id="SM00278">
    <property type="entry name" value="HhH1"/>
    <property type="match status" value="4"/>
</dbReference>
<dbReference type="SMART" id="SM00532">
    <property type="entry name" value="LIGANc"/>
    <property type="match status" value="1"/>
</dbReference>
<dbReference type="SUPFAM" id="SSF52113">
    <property type="entry name" value="BRCT domain"/>
    <property type="match status" value="1"/>
</dbReference>
<dbReference type="SUPFAM" id="SSF56091">
    <property type="entry name" value="DNA ligase/mRNA capping enzyme, catalytic domain"/>
    <property type="match status" value="1"/>
</dbReference>
<dbReference type="SUPFAM" id="SSF50249">
    <property type="entry name" value="Nucleic acid-binding proteins"/>
    <property type="match status" value="1"/>
</dbReference>
<dbReference type="SUPFAM" id="SSF47781">
    <property type="entry name" value="RuvA domain 2-like"/>
    <property type="match status" value="1"/>
</dbReference>
<dbReference type="PROSITE" id="PS50172">
    <property type="entry name" value="BRCT"/>
    <property type="match status" value="1"/>
</dbReference>
<dbReference type="PROSITE" id="PS01055">
    <property type="entry name" value="DNA_LIGASE_N1"/>
    <property type="match status" value="1"/>
</dbReference>
<dbReference type="PROSITE" id="PS01056">
    <property type="entry name" value="DNA_LIGASE_N2"/>
    <property type="match status" value="1"/>
</dbReference>
<reference key="1">
    <citation type="journal article" date="2010" name="J. Bacteriol.">
        <title>Genome sequence of the deep-rooted Yersinia pestis strain Angola reveals new insights into the evolution and pangenome of the plague bacterium.</title>
        <authorList>
            <person name="Eppinger M."/>
            <person name="Worsham P.L."/>
            <person name="Nikolich M.P."/>
            <person name="Riley D.R."/>
            <person name="Sebastian Y."/>
            <person name="Mou S."/>
            <person name="Achtman M."/>
            <person name="Lindler L.E."/>
            <person name="Ravel J."/>
        </authorList>
    </citation>
    <scope>NUCLEOTIDE SEQUENCE [LARGE SCALE GENOMIC DNA]</scope>
    <source>
        <strain>Angola</strain>
    </source>
</reference>
<gene>
    <name evidence="1" type="primary">ligA</name>
    <name type="ordered locus">YpAngola_A2744</name>
</gene>
<proteinExistence type="inferred from homology"/>
<name>DNLJ_YERPG</name>
<keyword id="KW-0227">DNA damage</keyword>
<keyword id="KW-0234">DNA repair</keyword>
<keyword id="KW-0235">DNA replication</keyword>
<keyword id="KW-0436">Ligase</keyword>
<keyword id="KW-0460">Magnesium</keyword>
<keyword id="KW-0464">Manganese</keyword>
<keyword id="KW-0479">Metal-binding</keyword>
<keyword id="KW-0520">NAD</keyword>
<keyword id="KW-0862">Zinc</keyword>
<accession>A9QZH0</accession>
<evidence type="ECO:0000255" key="1">
    <source>
        <dbReference type="HAMAP-Rule" id="MF_01588"/>
    </source>
</evidence>
<organism>
    <name type="scientific">Yersinia pestis bv. Antiqua (strain Angola)</name>
    <dbReference type="NCBI Taxonomy" id="349746"/>
    <lineage>
        <taxon>Bacteria</taxon>
        <taxon>Pseudomonadati</taxon>
        <taxon>Pseudomonadota</taxon>
        <taxon>Gammaproteobacteria</taxon>
        <taxon>Enterobacterales</taxon>
        <taxon>Yersiniaceae</taxon>
        <taxon>Yersinia</taxon>
    </lineage>
</organism>